<organism>
    <name type="scientific">Legionella pneumophila (strain Lens)</name>
    <dbReference type="NCBI Taxonomy" id="297245"/>
    <lineage>
        <taxon>Bacteria</taxon>
        <taxon>Pseudomonadati</taxon>
        <taxon>Pseudomonadota</taxon>
        <taxon>Gammaproteobacteria</taxon>
        <taxon>Legionellales</taxon>
        <taxon>Legionellaceae</taxon>
        <taxon>Legionella</taxon>
    </lineage>
</organism>
<gene>
    <name type="ordered locus">lpl0620</name>
</gene>
<feature type="chain" id="PRO_0000258834" description="UPF0301 protein lpl0620">
    <location>
        <begin position="1"/>
        <end position="187"/>
    </location>
</feature>
<sequence>MAIISSLANQLLIAMPSLKDPNFERSVVYLCEHNEQGSVGLIINRPLQFPLSIVFEQLQIEPIRVEKNGLPLLFGGPVQPERGFVIHKQMGGWRSSLFLQDEVTVTTSNDIIRAIAYDEGPKDVLITLGYAAWTEQQLEREIMSNTWLVCPYKSEILYEVPFEERWEYAGLTLGIKMNQLSSDAGHA</sequence>
<comment type="similarity">
    <text evidence="1">Belongs to the UPF0301 (AlgH) family.</text>
</comment>
<accession>Q5WYW5</accession>
<evidence type="ECO:0000255" key="1">
    <source>
        <dbReference type="HAMAP-Rule" id="MF_00758"/>
    </source>
</evidence>
<name>Y620_LEGPL</name>
<protein>
    <recommendedName>
        <fullName evidence="1">UPF0301 protein lpl0620</fullName>
    </recommendedName>
</protein>
<dbReference type="EMBL" id="CR628337">
    <property type="protein sequence ID" value="CAH14853.1"/>
    <property type="molecule type" value="Genomic_DNA"/>
</dbReference>
<dbReference type="RefSeq" id="WP_011214807.1">
    <property type="nucleotide sequence ID" value="NC_006369.1"/>
</dbReference>
<dbReference type="SMR" id="Q5WYW5"/>
<dbReference type="KEGG" id="lpf:lpl0620"/>
<dbReference type="LegioList" id="lpl0620"/>
<dbReference type="HOGENOM" id="CLU_057596_1_0_6"/>
<dbReference type="Proteomes" id="UP000002517">
    <property type="component" value="Chromosome"/>
</dbReference>
<dbReference type="GO" id="GO:0005829">
    <property type="term" value="C:cytosol"/>
    <property type="evidence" value="ECO:0007669"/>
    <property type="project" value="TreeGrafter"/>
</dbReference>
<dbReference type="Gene3D" id="3.40.1740.10">
    <property type="entry name" value="VC0467-like"/>
    <property type="match status" value="1"/>
</dbReference>
<dbReference type="HAMAP" id="MF_00758">
    <property type="entry name" value="UPF0301"/>
    <property type="match status" value="1"/>
</dbReference>
<dbReference type="InterPro" id="IPR003774">
    <property type="entry name" value="AlgH-like"/>
</dbReference>
<dbReference type="NCBIfam" id="NF001266">
    <property type="entry name" value="PRK00228.1-1"/>
    <property type="match status" value="1"/>
</dbReference>
<dbReference type="PANTHER" id="PTHR30327">
    <property type="entry name" value="UNCHARACTERIZED PROTEIN YQGE"/>
    <property type="match status" value="1"/>
</dbReference>
<dbReference type="PANTHER" id="PTHR30327:SF1">
    <property type="entry name" value="UPF0301 PROTEIN YQGE"/>
    <property type="match status" value="1"/>
</dbReference>
<dbReference type="Pfam" id="PF02622">
    <property type="entry name" value="DUF179"/>
    <property type="match status" value="1"/>
</dbReference>
<dbReference type="SUPFAM" id="SSF143456">
    <property type="entry name" value="VC0467-like"/>
    <property type="match status" value="1"/>
</dbReference>
<proteinExistence type="inferred from homology"/>
<reference key="1">
    <citation type="journal article" date="2004" name="Nat. Genet.">
        <title>Evidence in the Legionella pneumophila genome for exploitation of host cell functions and high genome plasticity.</title>
        <authorList>
            <person name="Cazalet C."/>
            <person name="Rusniok C."/>
            <person name="Brueggemann H."/>
            <person name="Zidane N."/>
            <person name="Magnier A."/>
            <person name="Ma L."/>
            <person name="Tichit M."/>
            <person name="Jarraud S."/>
            <person name="Bouchier C."/>
            <person name="Vandenesch F."/>
            <person name="Kunst F."/>
            <person name="Etienne J."/>
            <person name="Glaser P."/>
            <person name="Buchrieser C."/>
        </authorList>
    </citation>
    <scope>NUCLEOTIDE SEQUENCE [LARGE SCALE GENOMIC DNA]</scope>
    <source>
        <strain>Lens</strain>
    </source>
</reference>